<organism>
    <name type="scientific">Mus musculus</name>
    <name type="common">Mouse</name>
    <dbReference type="NCBI Taxonomy" id="10090"/>
    <lineage>
        <taxon>Eukaryota</taxon>
        <taxon>Metazoa</taxon>
        <taxon>Chordata</taxon>
        <taxon>Craniata</taxon>
        <taxon>Vertebrata</taxon>
        <taxon>Euteleostomi</taxon>
        <taxon>Mammalia</taxon>
        <taxon>Eutheria</taxon>
        <taxon>Euarchontoglires</taxon>
        <taxon>Glires</taxon>
        <taxon>Rodentia</taxon>
        <taxon>Myomorpha</taxon>
        <taxon>Muroidea</taxon>
        <taxon>Muridae</taxon>
        <taxon>Murinae</taxon>
        <taxon>Mus</taxon>
        <taxon>Mus</taxon>
    </lineage>
</organism>
<accession>P04071</accession>
<feature type="signal peptide" evidence="5">
    <location>
        <begin position="1"/>
        <end position="18"/>
    </location>
</feature>
<feature type="propeptide" id="PRO_0000027985" description="Activation peptide" evidence="4">
    <location>
        <begin position="19"/>
        <end position="24"/>
    </location>
</feature>
<feature type="chain" id="PRO_0000027986" description="Kallikrein 1-related peptidase b16">
    <location>
        <begin position="25"/>
        <end position="261"/>
    </location>
</feature>
<feature type="domain" description="Peptidase S1" evidence="3">
    <location>
        <begin position="25"/>
        <end position="258"/>
    </location>
</feature>
<feature type="active site" description="Charge relay system" evidence="1">
    <location>
        <position position="65"/>
    </location>
</feature>
<feature type="active site" description="Charge relay system" evidence="1">
    <location>
        <position position="120"/>
    </location>
</feature>
<feature type="active site" description="Charge relay system" evidence="1">
    <location>
        <position position="213"/>
    </location>
</feature>
<feature type="glycosylation site" description="N-linked (GlcNAc...) asparagine" evidence="2">
    <location>
        <position position="102"/>
    </location>
</feature>
<feature type="disulfide bond" evidence="3">
    <location>
        <begin position="31"/>
        <end position="173"/>
    </location>
</feature>
<feature type="disulfide bond" evidence="3">
    <location>
        <begin position="50"/>
        <end position="66"/>
    </location>
</feature>
<feature type="disulfide bond" evidence="3">
    <location>
        <begin position="152"/>
        <end position="219"/>
    </location>
</feature>
<feature type="disulfide bond" evidence="3">
    <location>
        <begin position="184"/>
        <end position="198"/>
    </location>
</feature>
<feature type="disulfide bond" evidence="3">
    <location>
        <begin position="209"/>
        <end position="234"/>
    </location>
</feature>
<feature type="sequence conflict" description="In Ref. 4; AA sequence." evidence="5" ref="4">
    <original>H</original>
    <variation>A</variation>
    <location>
        <position position="45"/>
    </location>
</feature>
<feature type="sequence conflict" description="In Ref. 4; AA sequence." evidence="5" ref="4">
    <original>HI</original>
    <variation>YL</variation>
    <location>
        <begin position="48"/>
        <end position="49"/>
    </location>
</feature>
<comment type="catalytic activity">
    <reaction>
        <text>Cleavage of the Leu-|-Leu bond in synthetic tetradecapeptide renin substrate, to produce angiotensin I, but not active on natural angiotensinogen. Also hydrolyzes Bz-Arg-p-nitroanilide.</text>
        <dbReference type="EC" id="3.4.21.54"/>
    </reaction>
</comment>
<comment type="similarity">
    <text evidence="3">Belongs to the peptidase S1 family. Kallikrein subfamily.</text>
</comment>
<reference key="1">
    <citation type="journal article" date="1988" name="J. Biol. Chem.">
        <title>Sequence and expression of mouse gamma-renin.</title>
        <authorList>
            <person name="Drinkwater C.C."/>
            <person name="Evans B.A."/>
            <person name="Richards R.I."/>
        </authorList>
    </citation>
    <scope>NUCLEOTIDE SEQUENCE [MRNA]</scope>
</reference>
<reference key="2">
    <citation type="journal article" date="2004" name="Genome Res.">
        <title>The status, quality, and expansion of the NIH full-length cDNA project: the Mammalian Gene Collection (MGC).</title>
        <authorList>
            <consortium name="The MGC Project Team"/>
        </authorList>
    </citation>
    <scope>NUCLEOTIDE SEQUENCE [LARGE SCALE MRNA]</scope>
    <source>
        <strain>FVB/N</strain>
        <tissue>Salivary gland</tissue>
    </source>
</reference>
<reference key="3">
    <citation type="journal article" date="1987" name="J. Biol. Chem.">
        <title>Mouse glandular kallikrein genes. Structure and partial sequence analysis of the kallikrein gene locus.</title>
        <authorList>
            <person name="Evans B.A."/>
            <person name="Drinkwater C.C."/>
            <person name="Richards R.I."/>
        </authorList>
    </citation>
    <scope>NUCLEOTIDE SEQUENCE [GENOMIC DNA] OF 16-54 AND 70-122</scope>
</reference>
<reference key="4">
    <citation type="journal article" date="1983" name="J. Biol. Chem.">
        <title>Purification and properties of renin and gamma-renin from the mouse submaxillary gland.</title>
        <authorList>
            <person name="Poe M."/>
            <person name="Wu J.K."/>
            <person name="Florance J.R."/>
            <person name="Rodkey J.A."/>
            <person name="Bennett C.D."/>
            <person name="Hoogsteen K."/>
        </authorList>
    </citation>
    <scope>PROTEIN SEQUENCE OF 25-64 AND 165-184</scope>
    <source>
        <strain>Swiss Webster</strain>
    </source>
</reference>
<gene>
    <name type="primary">Klk1b16</name>
    <name type="synonym">Klk-16</name>
    <name type="synonym">Klk16</name>
</gene>
<dbReference type="EC" id="3.4.21.54"/>
<dbReference type="EMBL" id="J03877">
    <property type="protein sequence ID" value="AAA40049.1"/>
    <property type="molecule type" value="mRNA"/>
</dbReference>
<dbReference type="EMBL" id="BC012237">
    <property type="protein sequence ID" value="AAH12237.1"/>
    <property type="molecule type" value="mRNA"/>
</dbReference>
<dbReference type="EMBL" id="M18594">
    <property type="protein sequence ID" value="AAA39357.1"/>
    <property type="molecule type" value="Genomic_DNA"/>
</dbReference>
<dbReference type="EMBL" id="M18615">
    <property type="protein sequence ID" value="AAA39358.1"/>
    <property type="molecule type" value="Genomic_DNA"/>
</dbReference>
<dbReference type="CCDS" id="CCDS21197.1"/>
<dbReference type="PIR" id="A28062">
    <property type="entry name" value="A28062"/>
</dbReference>
<dbReference type="RefSeq" id="NP_032480.1">
    <property type="nucleotide sequence ID" value="NM_008454.3"/>
</dbReference>
<dbReference type="SMR" id="P04071"/>
<dbReference type="FunCoup" id="P04071">
    <property type="interactions" value="51"/>
</dbReference>
<dbReference type="STRING" id="10090.ENSMUSP00000005933"/>
<dbReference type="MEROPS" id="S01.163"/>
<dbReference type="GlyCosmos" id="P04071">
    <property type="glycosylation" value="1 site, No reported glycans"/>
</dbReference>
<dbReference type="GlyGen" id="P04071">
    <property type="glycosylation" value="1 site"/>
</dbReference>
<dbReference type="PaxDb" id="10090-ENSMUSP00000005933"/>
<dbReference type="ProteomicsDB" id="268929"/>
<dbReference type="DNASU" id="16615"/>
<dbReference type="Ensembl" id="ENSMUST00000005933.4">
    <property type="protein sequence ID" value="ENSMUSP00000005933.3"/>
    <property type="gene ID" value="ENSMUSG00000038968.4"/>
</dbReference>
<dbReference type="GeneID" id="16615"/>
<dbReference type="KEGG" id="mmu:16615"/>
<dbReference type="UCSC" id="uc009goj.1">
    <property type="organism name" value="mouse"/>
</dbReference>
<dbReference type="AGR" id="MGI:891982"/>
<dbReference type="CTD" id="16615"/>
<dbReference type="MGI" id="MGI:891982">
    <property type="gene designation" value="Klk1b16"/>
</dbReference>
<dbReference type="VEuPathDB" id="HostDB:ENSMUSG00000038968"/>
<dbReference type="eggNOG" id="KOG3627">
    <property type="taxonomic scope" value="Eukaryota"/>
</dbReference>
<dbReference type="GeneTree" id="ENSGT01020000230389"/>
<dbReference type="HOGENOM" id="CLU_006842_1_1_1"/>
<dbReference type="InParanoid" id="P04071"/>
<dbReference type="OrthoDB" id="10061449at2759"/>
<dbReference type="PhylomeDB" id="P04071"/>
<dbReference type="TreeFam" id="TF331065"/>
<dbReference type="Reactome" id="R-MMU-1592389">
    <property type="pathway name" value="Activation of Matrix Metalloproteinases"/>
</dbReference>
<dbReference type="BioGRID-ORCS" id="16615">
    <property type="hits" value="2 hits in 78 CRISPR screens"/>
</dbReference>
<dbReference type="ChiTaRS" id="Klk1b16">
    <property type="organism name" value="mouse"/>
</dbReference>
<dbReference type="PRO" id="PR:P04071"/>
<dbReference type="Proteomes" id="UP000000589">
    <property type="component" value="Chromosome 7"/>
</dbReference>
<dbReference type="RNAct" id="P04071">
    <property type="molecule type" value="protein"/>
</dbReference>
<dbReference type="Bgee" id="ENSMUSG00000038968">
    <property type="expression patterns" value="Expressed in submandibular gland and 12 other cell types or tissues"/>
</dbReference>
<dbReference type="ExpressionAtlas" id="P04071">
    <property type="expression patterns" value="baseline and differential"/>
</dbReference>
<dbReference type="GO" id="GO:0004252">
    <property type="term" value="F:serine-type endopeptidase activity"/>
    <property type="evidence" value="ECO:0007669"/>
    <property type="project" value="UniProtKB-EC"/>
</dbReference>
<dbReference type="GO" id="GO:0006508">
    <property type="term" value="P:proteolysis"/>
    <property type="evidence" value="ECO:0007669"/>
    <property type="project" value="UniProtKB-KW"/>
</dbReference>
<dbReference type="CDD" id="cd00190">
    <property type="entry name" value="Tryp_SPc"/>
    <property type="match status" value="1"/>
</dbReference>
<dbReference type="FunFam" id="2.40.10.10:FF:000010">
    <property type="entry name" value="Kallikrein related peptidase 11"/>
    <property type="match status" value="1"/>
</dbReference>
<dbReference type="Gene3D" id="2.40.10.10">
    <property type="entry name" value="Trypsin-like serine proteases"/>
    <property type="match status" value="2"/>
</dbReference>
<dbReference type="InterPro" id="IPR009003">
    <property type="entry name" value="Peptidase_S1_PA"/>
</dbReference>
<dbReference type="InterPro" id="IPR043504">
    <property type="entry name" value="Peptidase_S1_PA_chymotrypsin"/>
</dbReference>
<dbReference type="InterPro" id="IPR001314">
    <property type="entry name" value="Peptidase_S1A"/>
</dbReference>
<dbReference type="InterPro" id="IPR001254">
    <property type="entry name" value="Trypsin_dom"/>
</dbReference>
<dbReference type="InterPro" id="IPR018114">
    <property type="entry name" value="TRYPSIN_HIS"/>
</dbReference>
<dbReference type="InterPro" id="IPR033116">
    <property type="entry name" value="TRYPSIN_SER"/>
</dbReference>
<dbReference type="PANTHER" id="PTHR24271:SF47">
    <property type="entry name" value="KALLIKREIN-1"/>
    <property type="match status" value="1"/>
</dbReference>
<dbReference type="PANTHER" id="PTHR24271">
    <property type="entry name" value="KALLIKREIN-RELATED"/>
    <property type="match status" value="1"/>
</dbReference>
<dbReference type="Pfam" id="PF00089">
    <property type="entry name" value="Trypsin"/>
    <property type="match status" value="1"/>
</dbReference>
<dbReference type="PRINTS" id="PR00722">
    <property type="entry name" value="CHYMOTRYPSIN"/>
</dbReference>
<dbReference type="SMART" id="SM00020">
    <property type="entry name" value="Tryp_SPc"/>
    <property type="match status" value="1"/>
</dbReference>
<dbReference type="SUPFAM" id="SSF50494">
    <property type="entry name" value="Trypsin-like serine proteases"/>
    <property type="match status" value="1"/>
</dbReference>
<dbReference type="PROSITE" id="PS50240">
    <property type="entry name" value="TRYPSIN_DOM"/>
    <property type="match status" value="1"/>
</dbReference>
<dbReference type="PROSITE" id="PS00134">
    <property type="entry name" value="TRYPSIN_HIS"/>
    <property type="match status" value="1"/>
</dbReference>
<dbReference type="PROSITE" id="PS00135">
    <property type="entry name" value="TRYPSIN_SER"/>
    <property type="match status" value="1"/>
</dbReference>
<protein>
    <recommendedName>
        <fullName>Kallikrein 1-related peptidase b16</fullName>
        <ecNumber>3.4.21.54</ecNumber>
    </recommendedName>
    <alternativeName>
        <fullName>Gamma-renin, submandibular gland</fullName>
    </alternativeName>
    <alternativeName>
        <fullName>Glandular kallikrein K16</fullName>
        <shortName>mGK-16</shortName>
    </alternativeName>
</protein>
<evidence type="ECO:0000250" key="1"/>
<evidence type="ECO:0000255" key="2"/>
<evidence type="ECO:0000255" key="3">
    <source>
        <dbReference type="PROSITE-ProRule" id="PRU00274"/>
    </source>
</evidence>
<evidence type="ECO:0000269" key="4">
    <source>
    </source>
</evidence>
<evidence type="ECO:0000305" key="5"/>
<proteinExistence type="evidence at protein level"/>
<name>K1B16_MOUSE</name>
<keyword id="KW-0903">Direct protein sequencing</keyword>
<keyword id="KW-1015">Disulfide bond</keyword>
<keyword id="KW-0325">Glycoprotein</keyword>
<keyword id="KW-0378">Hydrolase</keyword>
<keyword id="KW-0645">Protease</keyword>
<keyword id="KW-1185">Reference proteome</keyword>
<keyword id="KW-0720">Serine protease</keyword>
<keyword id="KW-0732">Signal</keyword>
<keyword id="KW-0865">Zymogen</keyword>
<sequence length="261" mass="28722">MWFLILFLALSLGGIDAAPPVQSRIVGGFKCEKNSQPWQVAVYYHKEHICGGVLLDRNWVLTAAHCYVDECEVWLGKNQLFQEEPSAQNRLVSKSFPHPGFNMTLLTFEKLPPGADFSNDLMLLRLSKPADITDVVKPIDLPTKEPKLDSTCLVSGWGSITPTKWQKPDDLQCMFTKLLPNENCAKAYLLKVTDVMLCTIEMGEDKGPCVGDSGGPLICDGVLQGTVSIGPDPCGIPGVSAIYTNLVKFNSWIKDTMMKNA</sequence>